<comment type="function">
    <text evidence="1">Involved in nitrogen regulation. Enhances the transcription of the nitrogen fixation (nif) operon under nitrogen-limited conditions. Acts by binding to the nifH promoter region.</text>
</comment>
<comment type="subunit">
    <text evidence="1">Interacts with the general archaeal transcription factors TBPs.</text>
</comment>
<comment type="induction">
    <text evidence="1">Induced by nitrogen-limited conditions.</text>
</comment>
<comment type="disruption phenotype">
    <text evidence="1">Under nitrogen-limited conditions, mutant shows a considerably changed growth rate and a prolonged lag phase. Level of NifH is significantly decreased.</text>
</comment>
<protein>
    <recommendedName>
        <fullName evidence="2">Nif-regulating protein A</fullName>
    </recommendedName>
</protein>
<evidence type="ECO:0000269" key="1">
    <source>
    </source>
</evidence>
<evidence type="ECO:0000303" key="2">
    <source>
    </source>
</evidence>
<evidence type="ECO:0000312" key="3">
    <source>
        <dbReference type="EMBL" id="AAM31404.1"/>
    </source>
</evidence>
<name>NRPA_METMA</name>
<feature type="chain" id="PRO_0000431493" description="Nif-regulating protein A">
    <location>
        <begin position="1"/>
        <end position="134"/>
    </location>
</feature>
<feature type="zinc finger region" description="C4-type; atypical" evidence="2">
    <location>
        <begin position="3"/>
        <end position="36"/>
    </location>
</feature>
<sequence length="134" mass="15197">MHCLECGLVYIVSGLKVPEKISVRVFVNRIEHPFTHWVKLNAGELLREDEEIILDKVKTGYGSPFVITSLQIGVRRVPSALAEELDTIWARPLNEITFAKRRKIRQKHPMSFENITSTAGTSTASEYLEVVDES</sequence>
<organism>
    <name type="scientific">Methanosarcina mazei (strain ATCC BAA-159 / DSM 3647 / Goe1 / Go1 / JCM 11833 / OCM 88)</name>
    <name type="common">Methanosarcina frisia</name>
    <dbReference type="NCBI Taxonomy" id="192952"/>
    <lineage>
        <taxon>Archaea</taxon>
        <taxon>Methanobacteriati</taxon>
        <taxon>Methanobacteriota</taxon>
        <taxon>Stenosarchaea group</taxon>
        <taxon>Methanomicrobia</taxon>
        <taxon>Methanosarcinales</taxon>
        <taxon>Methanosarcinaceae</taxon>
        <taxon>Methanosarcina</taxon>
    </lineage>
</organism>
<gene>
    <name evidence="2" type="primary">nrpA</name>
    <name evidence="3" type="ordered locus">MM_1708</name>
</gene>
<reference key="1">
    <citation type="journal article" date="2002" name="J. Mol. Microbiol. Biotechnol.">
        <title>The genome of Methanosarcina mazei: evidence for lateral gene transfer between Bacteria and Archaea.</title>
        <authorList>
            <person name="Deppenmeier U."/>
            <person name="Johann A."/>
            <person name="Hartsch T."/>
            <person name="Merkl R."/>
            <person name="Schmitz R.A."/>
            <person name="Martinez-Arias R."/>
            <person name="Henne A."/>
            <person name="Wiezer A."/>
            <person name="Baeumer S."/>
            <person name="Jacobi C."/>
            <person name="Brueggemann H."/>
            <person name="Lienard T."/>
            <person name="Christmann A."/>
            <person name="Boemecke M."/>
            <person name="Steckel S."/>
            <person name="Bhattacharyya A."/>
            <person name="Lykidis A."/>
            <person name="Overbeek R."/>
            <person name="Klenk H.-P."/>
            <person name="Gunsalus R.P."/>
            <person name="Fritz H.-J."/>
            <person name="Gottschalk G."/>
        </authorList>
    </citation>
    <scope>NUCLEOTIDE SEQUENCE [LARGE SCALE GENOMIC DNA]</scope>
    <source>
        <strain>ATCC BAA-159 / DSM 3647 / Goe1 / Go1 / JCM 11833 / OCM 88</strain>
    </source>
</reference>
<reference key="2">
    <citation type="journal article" date="2014" name="FEBS J.">
        <title>The transcriptional activator NrpA is crucial for inducing nitrogen fixation in Methanosarcina mazei Goe1 under nitrogen-limited conditions.</title>
        <authorList>
            <person name="Weidenbach K."/>
            <person name="Ehlers C."/>
            <person name="Schmitz R.A."/>
        </authorList>
    </citation>
    <scope>FUNCTION</scope>
    <scope>INTERACTION WITH TBPS</scope>
    <scope>INDUCTION</scope>
    <scope>DISRUPTION PHENOTYPE</scope>
    <source>
        <strain>ATCC BAA-159 / DSM 3647 / Goe1 / Go1 / JCM 11833 / OCM 88</strain>
    </source>
</reference>
<dbReference type="EMBL" id="AE008384">
    <property type="protein sequence ID" value="AAM31404.1"/>
    <property type="molecule type" value="Genomic_DNA"/>
</dbReference>
<dbReference type="KEGG" id="mma:MM_1708"/>
<dbReference type="PATRIC" id="fig|192952.21.peg.1982"/>
<dbReference type="eggNOG" id="arCOG02680">
    <property type="taxonomic scope" value="Archaea"/>
</dbReference>
<dbReference type="HOGENOM" id="CLU_1615313_0_0_2"/>
<dbReference type="Proteomes" id="UP000000595">
    <property type="component" value="Chromosome"/>
</dbReference>
<dbReference type="GO" id="GO:0003677">
    <property type="term" value="F:DNA binding"/>
    <property type="evidence" value="ECO:0007669"/>
    <property type="project" value="UniProtKB-KW"/>
</dbReference>
<dbReference type="GO" id="GO:0008270">
    <property type="term" value="F:zinc ion binding"/>
    <property type="evidence" value="ECO:0007669"/>
    <property type="project" value="UniProtKB-KW"/>
</dbReference>
<dbReference type="InterPro" id="IPR012041">
    <property type="entry name" value="Znf_CPxCG-like"/>
</dbReference>
<dbReference type="PANTHER" id="PTHR42195">
    <property type="entry name" value="UCP015877 FAMILY PROTEIN"/>
    <property type="match status" value="1"/>
</dbReference>
<dbReference type="PANTHER" id="PTHR42195:SF1">
    <property type="entry name" value="ZINC FINGER PROTEIN"/>
    <property type="match status" value="1"/>
</dbReference>
<dbReference type="Pfam" id="PF19769">
    <property type="entry name" value="CPxCG_zf"/>
    <property type="match status" value="1"/>
</dbReference>
<accession>Q8PW88</accession>
<keyword id="KW-0010">Activator</keyword>
<keyword id="KW-0238">DNA-binding</keyword>
<keyword id="KW-0479">Metal-binding</keyword>
<keyword id="KW-0804">Transcription</keyword>
<keyword id="KW-0805">Transcription regulation</keyword>
<keyword id="KW-0862">Zinc</keyword>
<keyword id="KW-0863">Zinc-finger</keyword>
<proteinExistence type="evidence at protein level"/>